<proteinExistence type="evidence at protein level"/>
<gene>
    <name evidence="8" type="primary">Bdh2</name>
    <name type="synonym">Dhrs6</name>
</gene>
<feature type="chain" id="PRO_0000398628" description="Dehydrogenase/reductase SDR family member 6">
    <location>
        <begin position="1"/>
        <end position="245"/>
    </location>
</feature>
<feature type="active site" description="Proton acceptor" evidence="4">
    <location>
        <position position="147"/>
    </location>
</feature>
<feature type="binding site" evidence="3">
    <location>
        <begin position="16"/>
        <end position="18"/>
    </location>
    <ligand>
        <name>NAD(+)</name>
        <dbReference type="ChEBI" id="CHEBI:57540"/>
    </ligand>
</feature>
<feature type="binding site" evidence="3">
    <location>
        <position position="37"/>
    </location>
    <ligand>
        <name>NAD(+)</name>
        <dbReference type="ChEBI" id="CHEBI:57540"/>
    </ligand>
</feature>
<feature type="binding site" evidence="3">
    <location>
        <position position="58"/>
    </location>
    <ligand>
        <name>NAD(+)</name>
        <dbReference type="ChEBI" id="CHEBI:57540"/>
    </ligand>
</feature>
<feature type="binding site" evidence="1">
    <location>
        <position position="144"/>
    </location>
    <ligand>
        <name>substrate</name>
    </ligand>
</feature>
<feature type="binding site" evidence="3">
    <location>
        <position position="151"/>
    </location>
    <ligand>
        <name>NAD(+)</name>
        <dbReference type="ChEBI" id="CHEBI:57540"/>
    </ligand>
</feature>
<feature type="binding site" evidence="3">
    <location>
        <begin position="180"/>
        <end position="184"/>
    </location>
    <ligand>
        <name>NAD(+)</name>
        <dbReference type="ChEBI" id="CHEBI:57540"/>
    </ligand>
</feature>
<feature type="binding site" evidence="1">
    <location>
        <position position="188"/>
    </location>
    <ligand>
        <name>substrate</name>
    </ligand>
</feature>
<feature type="binding site" evidence="1">
    <location>
        <position position="205"/>
    </location>
    <ligand>
        <name>substrate</name>
    </ligand>
</feature>
<feature type="mutagenesis site" description="Loss of function." evidence="5">
    <original>Y</original>
    <variation>F</variation>
    <location>
        <position position="147"/>
    </location>
</feature>
<comment type="function">
    <text evidence="2 3 5">NAD(H)-dependent dehydrogenase/reductase with a preference for cyclic substrates (By similarity). Catalyzes stereoselective conversion of 4-oxo-L-proline to cis-4-hydroxy-L-proline, likely a detoxification mechanism for ketoprolines (PubMed:35150746). Mediates the formation of 2,5-dihydroxybenzoate (2,5-DHBA), a siderophore that chelates free cytoplasmic iron and associates with LCN2, thereby regulating iron transport and homeostasis while protecting cells against free radical-induced oxidative stress. The iron-siderophore complex is imported into mitochondria, providing an iron source for mitochondrial metabolic processes in particular heme synthesis (By similarity). May act as a 3-hydroxybutyrate dehydrogenase (By similarity).</text>
</comment>
<comment type="catalytic activity">
    <reaction evidence="5">
        <text>cis-4-hydroxy-L-proline + NAD(+) = 4-oxo-L-proline + NADH + H(+)</text>
        <dbReference type="Rhea" id="RHEA:13601"/>
        <dbReference type="ChEBI" id="CHEBI:15378"/>
        <dbReference type="ChEBI" id="CHEBI:57540"/>
        <dbReference type="ChEBI" id="CHEBI:57945"/>
        <dbReference type="ChEBI" id="CHEBI:63727"/>
        <dbReference type="ChEBI" id="CHEBI:84813"/>
        <dbReference type="EC" id="1.1.1.104"/>
    </reaction>
    <physiologicalReaction direction="right-to-left" evidence="5">
        <dbReference type="Rhea" id="RHEA:13603"/>
    </physiologicalReaction>
</comment>
<comment type="catalytic activity">
    <reaction evidence="3">
        <text>(R)-3-hydroxybutanoate + NAD(+) = acetoacetate + NADH + H(+)</text>
        <dbReference type="Rhea" id="RHEA:20521"/>
        <dbReference type="ChEBI" id="CHEBI:10983"/>
        <dbReference type="ChEBI" id="CHEBI:13705"/>
        <dbReference type="ChEBI" id="CHEBI:15378"/>
        <dbReference type="ChEBI" id="CHEBI:57540"/>
        <dbReference type="ChEBI" id="CHEBI:57945"/>
        <dbReference type="EC" id="1.1.1.30"/>
    </reaction>
</comment>
<comment type="biophysicochemical properties">
    <kinetics>
        <KM evidence="5">387 uM for 4-oxo-L-proline</KM>
        <KM evidence="5">10232 uM for (R)-3-hydroxybutanoate</KM>
        <Vmax evidence="5">28.0 umol/min/mg enzyme toward 4-oxo-L-proline</Vmax>
        <Vmax evidence="5">0.04 umol/min/mg enzyme toward (R)-3-hydroxybutanoate</Vmax>
        <text>kcat is 14 sec(-1) for the NADH-dependent reduction of 4-oxo-L-proline. kcat is 0.02 sec(-1) for the NAD(+)-dependent oxidation of (R)-3-hydroxybutanoate.</text>
    </kinetics>
    <phDependence>
        <text evidence="5">Optimum pH is 6.5. Active from 5.5 to 9.0 with 4-oxo-L-proline.</text>
    </phDependence>
</comment>
<comment type="pathway">
    <text evidence="7">Amino-acid metabolism.</text>
</comment>
<comment type="pathway">
    <text evidence="2">Siderophore biosynthesis.</text>
</comment>
<comment type="subunit">
    <text evidence="3">Homotetramer.</text>
</comment>
<comment type="subcellular location">
    <subcellularLocation>
        <location evidence="3">Cytoplasm</location>
    </subcellularLocation>
</comment>
<comment type="similarity">
    <text evidence="6">Belongs to the short-chain dehydrogenases/reductases (SDR) family.</text>
</comment>
<comment type="caution">
    <text evidence="2 3">Postulated to act as a 3-hydroxybutyrate dehydrogenase, however its contribution to ketone body formation appears to be physiologically irrelevant since it has very low affinity for the substrate.</text>
</comment>
<comment type="sequence caution" evidence="6">
    <conflict type="erroneous initiation">
        <sequence resource="EMBL-CDS" id="EDL82248"/>
    </conflict>
    <text>Extended N-terminus.</text>
</comment>
<protein>
    <recommendedName>
        <fullName>Dehydrogenase/reductase SDR family member 6</fullName>
        <ecNumber evidence="6">1.1.1.-</ecNumber>
    </recommendedName>
    <alternativeName>
        <fullName>(R)-beta-hydroxybutyrate dehydrogenase</fullName>
    </alternativeName>
    <alternativeName>
        <fullName>3-hydroxybutyrate dehydrogenase type 2</fullName>
        <ecNumber evidence="3">1.1.1.30</ecNumber>
    </alternativeName>
    <alternativeName>
        <fullName>4-oxo-L-proline reductase</fullName>
        <ecNumber evidence="5">1.1.1.104</ecNumber>
    </alternativeName>
    <alternativeName>
        <fullName>Oxidoreductase UCPA</fullName>
    </alternativeName>
    <alternativeName>
        <fullName>Short chain dehydrogenase/reductase family 15C member 1</fullName>
    </alternativeName>
</protein>
<evidence type="ECO:0000250" key="1"/>
<evidence type="ECO:0000250" key="2">
    <source>
        <dbReference type="UniProtKB" id="Q8JZV9"/>
    </source>
</evidence>
<evidence type="ECO:0000250" key="3">
    <source>
        <dbReference type="UniProtKB" id="Q9BUT1"/>
    </source>
</evidence>
<evidence type="ECO:0000255" key="4">
    <source>
        <dbReference type="PROSITE-ProRule" id="PRU10001"/>
    </source>
</evidence>
<evidence type="ECO:0000269" key="5">
    <source>
    </source>
</evidence>
<evidence type="ECO:0000305" key="6"/>
<evidence type="ECO:0000305" key="7">
    <source>
    </source>
</evidence>
<evidence type="ECO:0000312" key="8">
    <source>
        <dbReference type="RGD" id="1309898"/>
    </source>
</evidence>
<accession>D4A1J4</accession>
<reference key="1">
    <citation type="submission" date="2005-07" db="EMBL/GenBank/DDBJ databases">
        <authorList>
            <person name="Mural R.J."/>
            <person name="Adams M.D."/>
            <person name="Myers E.W."/>
            <person name="Smith H.O."/>
            <person name="Venter J.C."/>
        </authorList>
    </citation>
    <scope>NUCLEOTIDE SEQUENCE [LARGE SCALE GENOMIC DNA]</scope>
    <source>
        <strain>Brown Norway</strain>
    </source>
</reference>
<reference key="2">
    <citation type="journal article" date="2022" name="J. Biol. Chem.">
        <title>Recharacterization of the Mammalian Cytosolic Type 2 (R)-beta-Hydroxybutyrate Dehydrogenase (BDH2) as 4-Oxo-L-Proline Reductase (EC 1.1.1.104).</title>
        <authorList>
            <person name="Kwiatkowski S."/>
            <person name="Bozko M."/>
            <person name="Zarod M."/>
            <person name="Witecka A."/>
            <person name="Kocdemir K."/>
            <person name="Jagielski A.K."/>
            <person name="Drozak J."/>
        </authorList>
    </citation>
    <scope>FUNCTION</scope>
    <scope>CATALYTIC ACTIVITY</scope>
    <scope>BIOPHYSICOCHEMICAL PROPERTIES</scope>
    <scope>PATHWAY</scope>
    <scope>IDENTIFICATION BY MASS SPECTROMETRY</scope>
    <scope>MUTAGENESIS OF TYR-147</scope>
</reference>
<keyword id="KW-0963">Cytoplasm</keyword>
<keyword id="KW-0443">Lipid metabolism</keyword>
<keyword id="KW-0520">NAD</keyword>
<keyword id="KW-0560">Oxidoreductase</keyword>
<keyword id="KW-1185">Reference proteome</keyword>
<name>DHRS6_RAT</name>
<dbReference type="EC" id="1.1.1.-" evidence="6"/>
<dbReference type="EC" id="1.1.1.30" evidence="3"/>
<dbReference type="EC" id="1.1.1.104" evidence="5"/>
<dbReference type="EMBL" id="CH473952">
    <property type="protein sequence ID" value="EDL82248.1"/>
    <property type="status" value="ALT_INIT"/>
    <property type="molecule type" value="Genomic_DNA"/>
</dbReference>
<dbReference type="RefSeq" id="NP_001099943.1">
    <property type="nucleotide sequence ID" value="NM_001106473.1"/>
</dbReference>
<dbReference type="RefSeq" id="XP_006233384.1">
    <property type="nucleotide sequence ID" value="XM_006233322.5"/>
</dbReference>
<dbReference type="SMR" id="D4A1J4"/>
<dbReference type="FunCoup" id="D4A1J4">
    <property type="interactions" value="76"/>
</dbReference>
<dbReference type="STRING" id="10116.ENSRNOP00000019507"/>
<dbReference type="iPTMnet" id="D4A1J4"/>
<dbReference type="PhosphoSitePlus" id="D4A1J4"/>
<dbReference type="PaxDb" id="10116-ENSRNOP00000019507"/>
<dbReference type="PeptideAtlas" id="D4A1J4"/>
<dbReference type="GeneID" id="295458"/>
<dbReference type="KEGG" id="rno:295458"/>
<dbReference type="AGR" id="RGD:1309898"/>
<dbReference type="CTD" id="56898"/>
<dbReference type="RGD" id="1309898">
    <property type="gene designation" value="Bdh2"/>
</dbReference>
<dbReference type="eggNOG" id="KOG0725">
    <property type="taxonomic scope" value="Eukaryota"/>
</dbReference>
<dbReference type="InParanoid" id="D4A1J4"/>
<dbReference type="OrthoDB" id="53161at9989"/>
<dbReference type="PhylomeDB" id="D4A1J4"/>
<dbReference type="TreeFam" id="TF328795"/>
<dbReference type="Reactome" id="R-RNO-77111">
    <property type="pathway name" value="Synthesis of Ketone Bodies"/>
</dbReference>
<dbReference type="PRO" id="PR:D4A1J4"/>
<dbReference type="Proteomes" id="UP000002494">
    <property type="component" value="Unplaced"/>
</dbReference>
<dbReference type="Proteomes" id="UP000234681">
    <property type="component" value="Chromosome 2"/>
</dbReference>
<dbReference type="GO" id="GO:0005737">
    <property type="term" value="C:cytoplasm"/>
    <property type="evidence" value="ECO:0000266"/>
    <property type="project" value="RGD"/>
</dbReference>
<dbReference type="GO" id="GO:0003858">
    <property type="term" value="F:3-hydroxybutyrate dehydrogenase activity"/>
    <property type="evidence" value="ECO:0000266"/>
    <property type="project" value="RGD"/>
</dbReference>
<dbReference type="GO" id="GO:0016617">
    <property type="term" value="F:4-oxoproline reductase activity"/>
    <property type="evidence" value="ECO:0007669"/>
    <property type="project" value="RHEA"/>
</dbReference>
<dbReference type="GO" id="GO:0051287">
    <property type="term" value="F:NAD binding"/>
    <property type="evidence" value="ECO:0000266"/>
    <property type="project" value="RGD"/>
</dbReference>
<dbReference type="GO" id="GO:0016628">
    <property type="term" value="F:oxidoreductase activity, acting on the CH-CH group of donors, NAD or NADP as acceptor"/>
    <property type="evidence" value="ECO:0000250"/>
    <property type="project" value="UniProtKB"/>
</dbReference>
<dbReference type="GO" id="GO:0030855">
    <property type="term" value="P:epithelial cell differentiation"/>
    <property type="evidence" value="ECO:0000266"/>
    <property type="project" value="RGD"/>
</dbReference>
<dbReference type="GO" id="GO:0006635">
    <property type="term" value="P:fatty acid beta-oxidation"/>
    <property type="evidence" value="ECO:0000266"/>
    <property type="project" value="RGD"/>
</dbReference>
<dbReference type="GO" id="GO:0042168">
    <property type="term" value="P:heme metabolic process"/>
    <property type="evidence" value="ECO:0000250"/>
    <property type="project" value="UniProtKB"/>
</dbReference>
<dbReference type="GO" id="GO:0019290">
    <property type="term" value="P:siderophore biosynthetic process"/>
    <property type="evidence" value="ECO:0000250"/>
    <property type="project" value="UniProtKB"/>
</dbReference>
<dbReference type="CDD" id="cd05368">
    <property type="entry name" value="DHRS6_like_SDR_c"/>
    <property type="match status" value="1"/>
</dbReference>
<dbReference type="FunFam" id="3.40.50.720:FF:000211">
    <property type="entry name" value="3-hydroxybutyrate dehydrogenase type 2"/>
    <property type="match status" value="1"/>
</dbReference>
<dbReference type="Gene3D" id="3.40.50.720">
    <property type="entry name" value="NAD(P)-binding Rossmann-like Domain"/>
    <property type="match status" value="1"/>
</dbReference>
<dbReference type="InterPro" id="IPR036291">
    <property type="entry name" value="NAD(P)-bd_dom_sf"/>
</dbReference>
<dbReference type="InterPro" id="IPR020904">
    <property type="entry name" value="Sc_DH/Rdtase_CS"/>
</dbReference>
<dbReference type="InterPro" id="IPR002347">
    <property type="entry name" value="SDR_fam"/>
</dbReference>
<dbReference type="InterPro" id="IPR051122">
    <property type="entry name" value="SDR_superfamily_enzyme"/>
</dbReference>
<dbReference type="PANTHER" id="PTHR43477:SF4">
    <property type="entry name" value="DEHYDROGENASE_REDUCTASE SDR FAMILY MEMBER 6"/>
    <property type="match status" value="1"/>
</dbReference>
<dbReference type="PANTHER" id="PTHR43477">
    <property type="entry name" value="DIHYDROANTICAPSIN 7-DEHYDROGENASE"/>
    <property type="match status" value="1"/>
</dbReference>
<dbReference type="Pfam" id="PF13561">
    <property type="entry name" value="adh_short_C2"/>
    <property type="match status" value="1"/>
</dbReference>
<dbReference type="PRINTS" id="PR00081">
    <property type="entry name" value="GDHRDH"/>
</dbReference>
<dbReference type="PRINTS" id="PR00080">
    <property type="entry name" value="SDRFAMILY"/>
</dbReference>
<dbReference type="SUPFAM" id="SSF51735">
    <property type="entry name" value="NAD(P)-binding Rossmann-fold domains"/>
    <property type="match status" value="1"/>
</dbReference>
<dbReference type="PROSITE" id="PS00061">
    <property type="entry name" value="ADH_SHORT"/>
    <property type="match status" value="1"/>
</dbReference>
<sequence>MGRLEGKVIVLTAAAQGIGRASALAFAREGAKVIATDINEAKLQELENYPGIQTRVLDVTKKRQIDQFASEIEKIDVLFNVAGFVHHGTILDCEEKDWDFSMNLNVRSMYLMIKAFLPKMLAQKSGNIINMSSVASSIKGVENRCVYSATKAAVIGLTKSVAADFIQQGIRCNCVCPGTVDTPSLQERIQARDDPKEALKAFLNRQKTGRFASAEEVALLCVYLASDESAYVTGTPVVIDGGWSL</sequence>
<organism>
    <name type="scientific">Rattus norvegicus</name>
    <name type="common">Rat</name>
    <dbReference type="NCBI Taxonomy" id="10116"/>
    <lineage>
        <taxon>Eukaryota</taxon>
        <taxon>Metazoa</taxon>
        <taxon>Chordata</taxon>
        <taxon>Craniata</taxon>
        <taxon>Vertebrata</taxon>
        <taxon>Euteleostomi</taxon>
        <taxon>Mammalia</taxon>
        <taxon>Eutheria</taxon>
        <taxon>Euarchontoglires</taxon>
        <taxon>Glires</taxon>
        <taxon>Rodentia</taxon>
        <taxon>Myomorpha</taxon>
        <taxon>Muroidea</taxon>
        <taxon>Muridae</taxon>
        <taxon>Murinae</taxon>
        <taxon>Rattus</taxon>
    </lineage>
</organism>